<organism>
    <name type="scientific">Agrobacterium fabrum (strain C58 / ATCC 33970)</name>
    <name type="common">Agrobacterium tumefaciens (strain C58)</name>
    <dbReference type="NCBI Taxonomy" id="176299"/>
    <lineage>
        <taxon>Bacteria</taxon>
        <taxon>Pseudomonadati</taxon>
        <taxon>Pseudomonadota</taxon>
        <taxon>Alphaproteobacteria</taxon>
        <taxon>Hyphomicrobiales</taxon>
        <taxon>Rhizobiaceae</taxon>
        <taxon>Rhizobium/Agrobacterium group</taxon>
        <taxon>Agrobacterium</taxon>
        <taxon>Agrobacterium tumefaciens complex</taxon>
    </lineage>
</organism>
<accession>Q8UGL3</accession>
<keyword id="KW-0002">3D-structure</keyword>
<keyword id="KW-0021">Allosteric enzyme</keyword>
<keyword id="KW-0028">Amino-acid biosynthesis</keyword>
<keyword id="KW-0963">Cytoplasm</keyword>
<keyword id="KW-0220">Diaminopimelate biosynthesis</keyword>
<keyword id="KW-0456">Lyase</keyword>
<keyword id="KW-0457">Lysine biosynthesis</keyword>
<keyword id="KW-1185">Reference proteome</keyword>
<keyword id="KW-0704">Schiff base</keyword>
<evidence type="ECO:0000255" key="1">
    <source>
        <dbReference type="HAMAP-Rule" id="MF_00418"/>
    </source>
</evidence>
<evidence type="ECO:0000269" key="2">
    <source>
    </source>
</evidence>
<evidence type="ECO:0000303" key="3">
    <source>
    </source>
</evidence>
<evidence type="ECO:0000305" key="4"/>
<evidence type="ECO:0000305" key="5">
    <source>
    </source>
</evidence>
<comment type="function">
    <text evidence="1 5">Catalyzes the condensation of (S)-aspartate-beta-semialdehyde [(S)-ASA] and pyruvate to 4-hydroxy-tetrahydrodipicolinate (HTPA).</text>
</comment>
<comment type="catalytic activity">
    <reaction evidence="1">
        <text>L-aspartate 4-semialdehyde + pyruvate = (2S,4S)-4-hydroxy-2,3,4,5-tetrahydrodipicolinate + H2O + H(+)</text>
        <dbReference type="Rhea" id="RHEA:34171"/>
        <dbReference type="ChEBI" id="CHEBI:15361"/>
        <dbReference type="ChEBI" id="CHEBI:15377"/>
        <dbReference type="ChEBI" id="CHEBI:15378"/>
        <dbReference type="ChEBI" id="CHEBI:67139"/>
        <dbReference type="ChEBI" id="CHEBI:537519"/>
        <dbReference type="EC" id="4.3.3.7"/>
    </reaction>
</comment>
<comment type="activity regulation">
    <text evidence="2">Is allosterically regulated by the feedback inhibitor (S)-lysine.</text>
</comment>
<comment type="biophysicochemical properties">
    <kinetics>
        <KM evidence="2">0.31 mM for pyruvate</KM>
        <KM evidence="2">0.32 mM for L-aspartate-4-semialdehyde</KM>
        <Vmax evidence="2">26.0 umol/min/mg enzyme</Vmax>
    </kinetics>
</comment>
<comment type="pathway">
    <text evidence="1">Amino-acid biosynthesis; L-lysine biosynthesis via DAP pathway; (S)-tetrahydrodipicolinate from L-aspartate: step 3/4.</text>
</comment>
<comment type="subunit">
    <text evidence="1 2">Homotetramer; dimer of dimers.</text>
</comment>
<comment type="subcellular location">
    <subcellularLocation>
        <location evidence="1">Cytoplasm</location>
    </subcellularLocation>
</comment>
<comment type="similarity">
    <text evidence="1">Belongs to the DapA family.</text>
</comment>
<comment type="caution">
    <text evidence="4">The DapA family was originally thought to be dihydrodipicolinate synthases (DHDPS), catalyzing the condensation of (S)-aspartate-beta-semialdehyde [(S)-ASA] and pyruvate to dihydrodipicolinate (DHDP). However, it was shown in E.coli that the product of the enzymatic reaction is not dihydrodipicolinate but in fact (4S)-4-hydroxy-2,3,4,5-tetrahydro-(2S)-dipicolinic acid (HTPA), and that the consecutive dehydration reaction leading to DHDP is not spontaneous but catalyzed by DapB. This enzyme is still named DHDPS in PubMed:22949190 and PubMed:24677246, but since DHDPS is considered as a misleading name, it was not used in this entry.</text>
</comment>
<gene>
    <name evidence="1" type="primary">dapA</name>
    <name evidence="3" type="synonym">dapA7</name>
    <name type="ordered locus">Atu1024</name>
    <name type="ORF">AGR_C_1883</name>
</gene>
<proteinExistence type="evidence at protein level"/>
<feature type="chain" id="PRO_0000103079" description="4-hydroxy-tetrahydrodipicolinate synthase">
    <location>
        <begin position="1"/>
        <end position="294"/>
    </location>
</feature>
<feature type="active site" description="Proton donor/acceptor" evidence="1">
    <location>
        <position position="133"/>
    </location>
</feature>
<feature type="active site" description="Schiff-base intermediate with substrate" evidence="1 2">
    <location>
        <position position="162"/>
    </location>
</feature>
<feature type="binding site" evidence="1 2">
    <location>
        <position position="45"/>
    </location>
    <ligand>
        <name>pyruvate</name>
        <dbReference type="ChEBI" id="CHEBI:15361"/>
    </ligand>
</feature>
<feature type="binding site" evidence="1">
    <location>
        <position position="204"/>
    </location>
    <ligand>
        <name>pyruvate</name>
        <dbReference type="ChEBI" id="CHEBI:15361"/>
    </ligand>
</feature>
<feature type="site" description="Part of a proton relay during catalysis" evidence="1">
    <location>
        <position position="44"/>
    </location>
</feature>
<feature type="site" description="L-lysine inhibitor binding; via carbonyl oxygen" evidence="2">
    <location>
        <position position="49"/>
    </location>
</feature>
<feature type="site" description="L-lysine inhibitor binding" evidence="2">
    <location>
        <position position="56"/>
    </location>
</feature>
<feature type="site" description="L-lysine inhibitor binding" evidence="2">
    <location>
        <position position="80"/>
    </location>
</feature>
<feature type="site" description="L-lysine inhibitor binding" evidence="2">
    <location>
        <position position="84"/>
    </location>
</feature>
<feature type="site" description="L-lysine inhibitor binding" evidence="2">
    <location>
        <position position="106"/>
    </location>
</feature>
<feature type="site" description="Part of a proton relay during catalysis" evidence="1">
    <location>
        <position position="107"/>
    </location>
</feature>
<dbReference type="EC" id="4.3.3.7" evidence="1"/>
<dbReference type="EMBL" id="AE007869">
    <property type="protein sequence ID" value="AAK86832.1"/>
    <property type="molecule type" value="Genomic_DNA"/>
</dbReference>
<dbReference type="PIR" id="AG2702">
    <property type="entry name" value="AG2702"/>
</dbReference>
<dbReference type="PIR" id="G97484">
    <property type="entry name" value="G97484"/>
</dbReference>
<dbReference type="RefSeq" id="NP_354047.1">
    <property type="nucleotide sequence ID" value="NC_003062.2"/>
</dbReference>
<dbReference type="RefSeq" id="WP_006311526.1">
    <property type="nucleotide sequence ID" value="NC_003062.2"/>
</dbReference>
<dbReference type="PDB" id="4I7U">
    <property type="method" value="X-ray"/>
    <property type="resolution" value="1.55 A"/>
    <property type="chains" value="A/B/C/D=1-294"/>
</dbReference>
<dbReference type="PDB" id="4I7V">
    <property type="method" value="X-ray"/>
    <property type="resolution" value="1.45 A"/>
    <property type="chains" value="A/B/C/D=1-294"/>
</dbReference>
<dbReference type="PDB" id="4I7W">
    <property type="method" value="X-ray"/>
    <property type="resolution" value="1.30 A"/>
    <property type="chains" value="A/B=1-294"/>
</dbReference>
<dbReference type="PDBsum" id="4I7U"/>
<dbReference type="PDBsum" id="4I7V"/>
<dbReference type="PDBsum" id="4I7W"/>
<dbReference type="SMR" id="Q8UGL3"/>
<dbReference type="STRING" id="176299.Atu1024"/>
<dbReference type="EnsemblBacteria" id="AAK86832">
    <property type="protein sequence ID" value="AAK86832"/>
    <property type="gene ID" value="Atu1024"/>
</dbReference>
<dbReference type="GeneID" id="1133062"/>
<dbReference type="KEGG" id="atu:Atu1024"/>
<dbReference type="PATRIC" id="fig|176299.10.peg.1037"/>
<dbReference type="eggNOG" id="COG0329">
    <property type="taxonomic scope" value="Bacteria"/>
</dbReference>
<dbReference type="HOGENOM" id="CLU_049343_7_0_5"/>
<dbReference type="OrthoDB" id="9782828at2"/>
<dbReference type="PhylomeDB" id="Q8UGL3"/>
<dbReference type="BioCyc" id="AGRO:ATU1024-MONOMER"/>
<dbReference type="BRENDA" id="4.3.3.7">
    <property type="organism ID" value="200"/>
</dbReference>
<dbReference type="SABIO-RK" id="Q8UGL3"/>
<dbReference type="UniPathway" id="UPA00034">
    <property type="reaction ID" value="UER00017"/>
</dbReference>
<dbReference type="Proteomes" id="UP000000813">
    <property type="component" value="Chromosome circular"/>
</dbReference>
<dbReference type="GO" id="GO:0005829">
    <property type="term" value="C:cytosol"/>
    <property type="evidence" value="ECO:0007669"/>
    <property type="project" value="TreeGrafter"/>
</dbReference>
<dbReference type="GO" id="GO:0008840">
    <property type="term" value="F:4-hydroxy-tetrahydrodipicolinate synthase activity"/>
    <property type="evidence" value="ECO:0000314"/>
    <property type="project" value="UniProtKB"/>
</dbReference>
<dbReference type="GO" id="GO:0019877">
    <property type="term" value="P:diaminopimelate biosynthetic process"/>
    <property type="evidence" value="ECO:0007669"/>
    <property type="project" value="UniProtKB-UniRule"/>
</dbReference>
<dbReference type="GO" id="GO:0009089">
    <property type="term" value="P:lysine biosynthetic process via diaminopimelate"/>
    <property type="evidence" value="ECO:0007669"/>
    <property type="project" value="UniProtKB-UniRule"/>
</dbReference>
<dbReference type="GO" id="GO:0006090">
    <property type="term" value="P:pyruvate metabolic process"/>
    <property type="evidence" value="ECO:0000314"/>
    <property type="project" value="UniProtKB"/>
</dbReference>
<dbReference type="CDD" id="cd00950">
    <property type="entry name" value="DHDPS"/>
    <property type="match status" value="1"/>
</dbReference>
<dbReference type="FunFam" id="3.20.20.70:FF:000046">
    <property type="entry name" value="4-hydroxy-tetrahydrodipicolinate synthase"/>
    <property type="match status" value="1"/>
</dbReference>
<dbReference type="Gene3D" id="3.20.20.70">
    <property type="entry name" value="Aldolase class I"/>
    <property type="match status" value="1"/>
</dbReference>
<dbReference type="HAMAP" id="MF_00418">
    <property type="entry name" value="DapA"/>
    <property type="match status" value="1"/>
</dbReference>
<dbReference type="InterPro" id="IPR013785">
    <property type="entry name" value="Aldolase_TIM"/>
</dbReference>
<dbReference type="InterPro" id="IPR005263">
    <property type="entry name" value="DapA"/>
</dbReference>
<dbReference type="InterPro" id="IPR002220">
    <property type="entry name" value="DapA-like"/>
</dbReference>
<dbReference type="InterPro" id="IPR020625">
    <property type="entry name" value="Schiff_base-form_aldolases_AS"/>
</dbReference>
<dbReference type="InterPro" id="IPR020624">
    <property type="entry name" value="Schiff_base-form_aldolases_CS"/>
</dbReference>
<dbReference type="NCBIfam" id="TIGR00674">
    <property type="entry name" value="dapA"/>
    <property type="match status" value="1"/>
</dbReference>
<dbReference type="PANTHER" id="PTHR12128:SF66">
    <property type="entry name" value="4-HYDROXY-2-OXOGLUTARATE ALDOLASE, MITOCHONDRIAL"/>
    <property type="match status" value="1"/>
</dbReference>
<dbReference type="PANTHER" id="PTHR12128">
    <property type="entry name" value="DIHYDRODIPICOLINATE SYNTHASE"/>
    <property type="match status" value="1"/>
</dbReference>
<dbReference type="Pfam" id="PF00701">
    <property type="entry name" value="DHDPS"/>
    <property type="match status" value="1"/>
</dbReference>
<dbReference type="PIRSF" id="PIRSF001365">
    <property type="entry name" value="DHDPS"/>
    <property type="match status" value="1"/>
</dbReference>
<dbReference type="PRINTS" id="PR00146">
    <property type="entry name" value="DHPICSNTHASE"/>
</dbReference>
<dbReference type="SMART" id="SM01130">
    <property type="entry name" value="DHDPS"/>
    <property type="match status" value="1"/>
</dbReference>
<dbReference type="SUPFAM" id="SSF51569">
    <property type="entry name" value="Aldolase"/>
    <property type="match status" value="1"/>
</dbReference>
<dbReference type="PROSITE" id="PS00665">
    <property type="entry name" value="DHDPS_1"/>
    <property type="match status" value="1"/>
</dbReference>
<dbReference type="PROSITE" id="PS00666">
    <property type="entry name" value="DHDPS_2"/>
    <property type="match status" value="1"/>
</dbReference>
<protein>
    <recommendedName>
        <fullName evidence="1">4-hydroxy-tetrahydrodipicolinate synthase</fullName>
        <shortName evidence="1">HTPA synthase</shortName>
        <ecNumber evidence="1">4.3.3.7</ecNumber>
    </recommendedName>
</protein>
<sequence>MFKGSIPALITPFTDNGSVDEKAFAAHVEWQIAEGSNGLVPVGTTGESPTLSHDEHKRVVELCIEVAAKRVPVIAGAGSNNTDEAIELALHAQEAGADALLVVTPYYNKPTQKGLFAHFSAVAEAVKLPIVIYNIPPRSVVDMSPETMGALVKAHKNIIGVKDATGKLDRVSEQRISCGKDFVQLSGEDGTALGFNAHGGVGCISVTANVAPRLCSEFQAAMLAGDYAKALEYQDRLMPLHRAIFMEPGVCGTKYALSKTRGGNRRVRSPLMSTLEPATEAAIDAALKHAGLMN</sequence>
<reference key="1">
    <citation type="journal article" date="2001" name="Science">
        <title>The genome of the natural genetic engineer Agrobacterium tumefaciens C58.</title>
        <authorList>
            <person name="Wood D.W."/>
            <person name="Setubal J.C."/>
            <person name="Kaul R."/>
            <person name="Monks D.E."/>
            <person name="Kitajima J.P."/>
            <person name="Okura V.K."/>
            <person name="Zhou Y."/>
            <person name="Chen L."/>
            <person name="Wood G.E."/>
            <person name="Almeida N.F. Jr."/>
            <person name="Woo L."/>
            <person name="Chen Y."/>
            <person name="Paulsen I.T."/>
            <person name="Eisen J.A."/>
            <person name="Karp P.D."/>
            <person name="Bovee D. Sr."/>
            <person name="Chapman P."/>
            <person name="Clendenning J."/>
            <person name="Deatherage G."/>
            <person name="Gillet W."/>
            <person name="Grant C."/>
            <person name="Kutyavin T."/>
            <person name="Levy R."/>
            <person name="Li M.-J."/>
            <person name="McClelland E."/>
            <person name="Palmieri A."/>
            <person name="Raymond C."/>
            <person name="Rouse G."/>
            <person name="Saenphimmachak C."/>
            <person name="Wu Z."/>
            <person name="Romero P."/>
            <person name="Gordon D."/>
            <person name="Zhang S."/>
            <person name="Yoo H."/>
            <person name="Tao Y."/>
            <person name="Biddle P."/>
            <person name="Jung M."/>
            <person name="Krespan W."/>
            <person name="Perry M."/>
            <person name="Gordon-Kamm B."/>
            <person name="Liao L."/>
            <person name="Kim S."/>
            <person name="Hendrick C."/>
            <person name="Zhao Z.-Y."/>
            <person name="Dolan M."/>
            <person name="Chumley F."/>
            <person name="Tingey S.V."/>
            <person name="Tomb J.-F."/>
            <person name="Gordon M.P."/>
            <person name="Olson M.V."/>
            <person name="Nester E.W."/>
        </authorList>
    </citation>
    <scope>NUCLEOTIDE SEQUENCE [LARGE SCALE GENOMIC DNA]</scope>
    <source>
        <strain>C58 / ATCC 33970</strain>
    </source>
</reference>
<reference key="2">
    <citation type="journal article" date="2001" name="Science">
        <title>Genome sequence of the plant pathogen and biotechnology agent Agrobacterium tumefaciens C58.</title>
        <authorList>
            <person name="Goodner B."/>
            <person name="Hinkle G."/>
            <person name="Gattung S."/>
            <person name="Miller N."/>
            <person name="Blanchard M."/>
            <person name="Qurollo B."/>
            <person name="Goldman B.S."/>
            <person name="Cao Y."/>
            <person name="Askenazi M."/>
            <person name="Halling C."/>
            <person name="Mullin L."/>
            <person name="Houmiel K."/>
            <person name="Gordon J."/>
            <person name="Vaudin M."/>
            <person name="Iartchouk O."/>
            <person name="Epp A."/>
            <person name="Liu F."/>
            <person name="Wollam C."/>
            <person name="Allinger M."/>
            <person name="Doughty D."/>
            <person name="Scott C."/>
            <person name="Lappas C."/>
            <person name="Markelz B."/>
            <person name="Flanagan C."/>
            <person name="Crowell C."/>
            <person name="Gurson J."/>
            <person name="Lomo C."/>
            <person name="Sear C."/>
            <person name="Strub G."/>
            <person name="Cielo C."/>
            <person name="Slater S."/>
        </authorList>
    </citation>
    <scope>NUCLEOTIDE SEQUENCE [LARGE SCALE GENOMIC DNA]</scope>
    <source>
        <strain>C58 / ATCC 33970</strain>
    </source>
</reference>
<reference key="3">
    <citation type="journal article" date="2012" name="Acta Crystallogr. F">
        <title>Cloning, expression, purification and crystallization of dihydrodipicolinate synthase from Agrobacterium tumefaciens.</title>
        <authorList>
            <person name="Atkinson S.C."/>
            <person name="Dogovski C."/>
            <person name="Dobson R.C."/>
            <person name="Perugini M.A."/>
        </authorList>
    </citation>
    <scope>CRYSTALLIZATION</scope>
    <source>
        <strain>C58 / ATCC 33970</strain>
    </source>
</reference>
<reference key="4">
    <citation type="journal article" date="2014" name="Proteins">
        <title>Identification of the bona fide DHDPS from a common plant pathogen.</title>
        <authorList>
            <person name="Atkinson S.C."/>
            <person name="Hor L."/>
            <person name="Dogovski C."/>
            <person name="Dobson R.C."/>
            <person name="Perugini M.A."/>
        </authorList>
    </citation>
    <scope>X-RAY CRYSTALLOGRAPHY (1.30 ANGSTROMS) OF APOENZYME AND IN COMPLEXES WITH PYRUVATE AND LYSINE INHIBITOR</scope>
    <scope>FUNCTION</scope>
    <scope>BIOPHYSICOCHEMICAL PROPERTIES</scope>
    <scope>ACTIVITY REGULATION</scope>
    <scope>SUBUNIT</scope>
    <scope>ACTIVE SITE</scope>
    <source>
        <strain>C58 / ATCC 33970</strain>
    </source>
</reference>
<name>DAPA_AGRFC</name>